<accession>P0CAJ9</accession>
<gene>
    <name type="ordered locus">Ken-152</name>
</gene>
<sequence>METQKLVSMVKEALDKYSYPLTAKNIKAVIQKEYKVVLPTGSINSILYSNTELFEKVDKTNTIYPPLWMRKTN</sequence>
<reference key="1">
    <citation type="submission" date="2003-03" db="EMBL/GenBank/DDBJ databases">
        <title>African swine fever virus genomes.</title>
        <authorList>
            <person name="Kutish G.F."/>
            <person name="Rock D.L."/>
        </authorList>
    </citation>
    <scope>NUCLEOTIDE SEQUENCE [LARGE SCALE GENOMIC DNA]</scope>
</reference>
<proteinExistence type="inferred from homology"/>
<keyword id="KW-0244">Early protein</keyword>
<keyword id="KW-0946">Virion</keyword>
<protein>
    <recommendedName>
        <fullName>Uncharacterized protein I73R</fullName>
    </recommendedName>
</protein>
<dbReference type="EMBL" id="AY261360">
    <property type="status" value="NOT_ANNOTATED_CDS"/>
    <property type="molecule type" value="Genomic_DNA"/>
</dbReference>
<dbReference type="SMR" id="P0CAJ9"/>
<dbReference type="Proteomes" id="UP000000861">
    <property type="component" value="Segment"/>
</dbReference>
<dbReference type="GO" id="GO:0044423">
    <property type="term" value="C:virion component"/>
    <property type="evidence" value="ECO:0007669"/>
    <property type="project" value="UniProtKB-KW"/>
</dbReference>
<organismHost>
    <name type="scientific">Ornithodoros</name>
    <name type="common">relapsing fever ticks</name>
    <dbReference type="NCBI Taxonomy" id="6937"/>
</organismHost>
<organismHost>
    <name type="scientific">Phacochoerus aethiopicus</name>
    <name type="common">Warthog</name>
    <dbReference type="NCBI Taxonomy" id="85517"/>
</organismHost>
<organismHost>
    <name type="scientific">Phacochoerus africanus</name>
    <name type="common">Warthog</name>
    <dbReference type="NCBI Taxonomy" id="41426"/>
</organismHost>
<organismHost>
    <name type="scientific">Potamochoerus larvatus</name>
    <name type="common">Bushpig</name>
    <dbReference type="NCBI Taxonomy" id="273792"/>
</organismHost>
<organismHost>
    <name type="scientific">Sus scrofa</name>
    <name type="common">Pig</name>
    <dbReference type="NCBI Taxonomy" id="9823"/>
</organismHost>
<name>VF73R_ASFK5</name>
<organism>
    <name type="scientific">African swine fever virus (isolate Pig/Kenya/KEN-50/1950)</name>
    <name type="common">ASFV</name>
    <dbReference type="NCBI Taxonomy" id="561445"/>
    <lineage>
        <taxon>Viruses</taxon>
        <taxon>Varidnaviria</taxon>
        <taxon>Bamfordvirae</taxon>
        <taxon>Nucleocytoviricota</taxon>
        <taxon>Pokkesviricetes</taxon>
        <taxon>Asfuvirales</taxon>
        <taxon>Asfarviridae</taxon>
        <taxon>Asfivirus</taxon>
        <taxon>African swine fever virus</taxon>
    </lineage>
</organism>
<evidence type="ECO:0000250" key="1">
    <source>
        <dbReference type="UniProtKB" id="P27946"/>
    </source>
</evidence>
<evidence type="ECO:0000305" key="2"/>
<comment type="subcellular location">
    <subcellularLocation>
        <location evidence="1">Virion</location>
    </subcellularLocation>
</comment>
<comment type="induction">
    <text evidence="2">Expressed in the early phase of the viral replicative cycle.</text>
</comment>
<comment type="similarity">
    <text evidence="2">Belongs to the asfivirus I73R family.</text>
</comment>
<feature type="chain" id="PRO_0000373725" description="Uncharacterized protein I73R">
    <location>
        <begin position="1"/>
        <end position="73"/>
    </location>
</feature>